<keyword id="KW-0025">Alternative splicing</keyword>
<keyword id="KW-0507">mRNA processing</keyword>
<keyword id="KW-0508">mRNA splicing</keyword>
<keyword id="KW-1185">Reference proteome</keyword>
<keyword id="KW-0694">RNA-binding</keyword>
<keyword id="KW-0747">Spliceosome</keyword>
<organism>
    <name type="scientific">Bos taurus</name>
    <name type="common">Bovine</name>
    <dbReference type="NCBI Taxonomy" id="9913"/>
    <lineage>
        <taxon>Eukaryota</taxon>
        <taxon>Metazoa</taxon>
        <taxon>Chordata</taxon>
        <taxon>Craniata</taxon>
        <taxon>Vertebrata</taxon>
        <taxon>Euteleostomi</taxon>
        <taxon>Mammalia</taxon>
        <taxon>Eutheria</taxon>
        <taxon>Laurasiatheria</taxon>
        <taxon>Artiodactyla</taxon>
        <taxon>Ruminantia</taxon>
        <taxon>Pecora</taxon>
        <taxon>Bovidae</taxon>
        <taxon>Bovinae</taxon>
        <taxon>Bos</taxon>
    </lineage>
</organism>
<dbReference type="EMBL" id="BC149271">
    <property type="protein sequence ID" value="AAI49272.1"/>
    <property type="molecule type" value="mRNA"/>
</dbReference>
<dbReference type="EMBL" id="AW325666">
    <property type="status" value="NOT_ANNOTATED_CDS"/>
    <property type="molecule type" value="mRNA"/>
</dbReference>
<dbReference type="RefSeq" id="NP_001095324.2">
    <molecule id="A6QPE1-1"/>
    <property type="nucleotide sequence ID" value="NM_001101854.2"/>
</dbReference>
<dbReference type="RefSeq" id="XP_059741426.1">
    <molecule id="A6QPE1-2"/>
    <property type="nucleotide sequence ID" value="XM_059885443.1"/>
</dbReference>
<dbReference type="SMR" id="A6QPE1"/>
<dbReference type="FunCoup" id="A6QPE1">
    <property type="interactions" value="2895"/>
</dbReference>
<dbReference type="STRING" id="9913.ENSBTAP00000024429"/>
<dbReference type="PaxDb" id="9913-ENSBTAP00000024429"/>
<dbReference type="Ensembl" id="ENSBTAT00000024429.7">
    <molecule id="A6QPE1-1"/>
    <property type="protein sequence ID" value="ENSBTAP00000024429.5"/>
    <property type="gene ID" value="ENSBTAG00000018363.7"/>
</dbReference>
<dbReference type="GeneID" id="505408"/>
<dbReference type="KEGG" id="bta:505408"/>
<dbReference type="CTD" id="84060"/>
<dbReference type="VEuPathDB" id="HostDB:ENSBTAG00000018363"/>
<dbReference type="eggNOG" id="ENOG502QSNB">
    <property type="taxonomic scope" value="Eukaryota"/>
</dbReference>
<dbReference type="GeneTree" id="ENSGT00390000004541"/>
<dbReference type="HOGENOM" id="CLU_065720_0_0_1"/>
<dbReference type="InParanoid" id="A6QPE1"/>
<dbReference type="OMA" id="IWINLNS"/>
<dbReference type="OrthoDB" id="78358at2759"/>
<dbReference type="TreeFam" id="TF328457"/>
<dbReference type="Proteomes" id="UP000009136">
    <property type="component" value="Chromosome 4"/>
</dbReference>
<dbReference type="Bgee" id="ENSBTAG00000018363">
    <property type="expression patterns" value="Expressed in oocyte and 103 other cell types or tissues"/>
</dbReference>
<dbReference type="GO" id="GO:0005654">
    <property type="term" value="C:nucleoplasm"/>
    <property type="evidence" value="ECO:0000318"/>
    <property type="project" value="GO_Central"/>
</dbReference>
<dbReference type="GO" id="GO:0005681">
    <property type="term" value="C:spliceosomal complex"/>
    <property type="evidence" value="ECO:0007669"/>
    <property type="project" value="UniProtKB-KW"/>
</dbReference>
<dbReference type="GO" id="GO:0003723">
    <property type="term" value="F:RNA binding"/>
    <property type="evidence" value="ECO:0007669"/>
    <property type="project" value="UniProtKB-KW"/>
</dbReference>
<dbReference type="GO" id="GO:0006397">
    <property type="term" value="P:mRNA processing"/>
    <property type="evidence" value="ECO:0007669"/>
    <property type="project" value="UniProtKB-KW"/>
</dbReference>
<dbReference type="GO" id="GO:0008380">
    <property type="term" value="P:RNA splicing"/>
    <property type="evidence" value="ECO:0007669"/>
    <property type="project" value="UniProtKB-KW"/>
</dbReference>
<dbReference type="CDD" id="cd12442">
    <property type="entry name" value="RRM_RBM48"/>
    <property type="match status" value="1"/>
</dbReference>
<dbReference type="FunFam" id="3.30.70.330:FF:000424">
    <property type="entry name" value="RNA-binding protein 48 isoform X4"/>
    <property type="match status" value="1"/>
</dbReference>
<dbReference type="InterPro" id="IPR035979">
    <property type="entry name" value="RBD_domain_sf"/>
</dbReference>
<dbReference type="InterPro" id="IPR039599">
    <property type="entry name" value="RBM48"/>
</dbReference>
<dbReference type="InterPro" id="IPR034264">
    <property type="entry name" value="RBM48_RRM"/>
</dbReference>
<dbReference type="PANTHER" id="PTHR20957">
    <property type="entry name" value="RNA-BINDING PROTEIN 48"/>
    <property type="match status" value="1"/>
</dbReference>
<dbReference type="PANTHER" id="PTHR20957:SF0">
    <property type="entry name" value="RNA-BINDING PROTEIN 48"/>
    <property type="match status" value="1"/>
</dbReference>
<dbReference type="SUPFAM" id="SSF54928">
    <property type="entry name" value="RNA-binding domain, RBD"/>
    <property type="match status" value="1"/>
</dbReference>
<proteinExistence type="evidence at transcript level"/>
<comment type="function">
    <text evidence="1">As a component of the minor spliceosome, involved in the splicing of U12-type introns in pre-mRNAs.</text>
</comment>
<comment type="subunit">
    <text evidence="1">Component of the minor spliceosome. Within this complex, interacts with ARMC7 and PRPF8/PRP8.</text>
</comment>
<comment type="alternative products">
    <event type="alternative splicing"/>
    <isoform>
        <id>A6QPE1-1</id>
        <name>1</name>
        <sequence type="displayed"/>
    </isoform>
    <isoform>
        <id>A6QPE1-2</id>
        <name>2</name>
        <sequence type="described" ref="VSP_031784"/>
    </isoform>
</comment>
<comment type="similarity">
    <text evidence="4">Belongs to the RBM48 family.</text>
</comment>
<sequence length="362" mass="41206">MASSGGQIGGVLDHHVQRAVCDSRAKYREGRRPRAVKVYTINLESWYLLIQGVPAVGAMKELVERFALYGTIEQYNALDEYPAEDFTEVYLIKFLNLQSARIAKRKMDEQSFFGGLLHVCYAPEFETVEETRKKLRERNAYVARMTKNKDHYMTKKHKDAKDFRGAFHSKTSGFPAASLNTSTGNSDLCLPYSSELPLCYFSPKCKCSSGERVDRPSNSSQDGRNFDETLGRCDHCDSLQKMQMKTLQNSLARPGTQKALTPSEAVDRFMPRTTQLQERKRRREDDCKRETLAEACTSSKEVMIGPQLPGIPKVDTHDGSWNTTASLIREKLKEVISSVPKPPEDKVEDVHRSRPLKQRRRI</sequence>
<name>RBM48_BOVIN</name>
<feature type="chain" id="PRO_0000321513" description="RNA-binding protein 48">
    <location>
        <begin position="1"/>
        <end position="362"/>
    </location>
</feature>
<feature type="domain" description="RRM">
    <location>
        <begin position="46"/>
        <end position="124"/>
    </location>
</feature>
<feature type="region of interest" description="Disordered" evidence="2">
    <location>
        <begin position="334"/>
        <end position="362"/>
    </location>
</feature>
<feature type="compositionally biased region" description="Basic and acidic residues" evidence="2">
    <location>
        <begin position="342"/>
        <end position="352"/>
    </location>
</feature>
<feature type="compositionally biased region" description="Basic residues" evidence="2">
    <location>
        <begin position="353"/>
        <end position="362"/>
    </location>
</feature>
<feature type="splice variant" id="VSP_031784" description="In isoform 2." evidence="3">
    <location>
        <begin position="1"/>
        <end position="106"/>
    </location>
</feature>
<accession>A6QPE1</accession>
<reference key="1">
    <citation type="submission" date="2007-07" db="EMBL/GenBank/DDBJ databases">
        <authorList>
            <consortium name="NIH - Mammalian Gene Collection (MGC) project"/>
        </authorList>
    </citation>
    <scope>NUCLEOTIDE SEQUENCE [LARGE SCALE MRNA] (ISOFORM 2)</scope>
    <source>
        <strain>Crossbred X Angus</strain>
        <tissue>Liver</tissue>
    </source>
</reference>
<reference key="2">
    <citation type="journal article" date="2001" name="Genome Res.">
        <title>Sequence evaluation of four pooled-tissue normalized bovine cDNA libraries and construction of a gene index for cattle.</title>
        <authorList>
            <person name="Smith T.P.L."/>
            <person name="Grosse W.M."/>
            <person name="Freking B.A."/>
            <person name="Roberts A.J."/>
            <person name="Stone R.T."/>
            <person name="Casas E."/>
            <person name="Wray J.E."/>
            <person name="White J."/>
            <person name="Cho J."/>
            <person name="Fahrenkrug S.C."/>
            <person name="Bennett G.L."/>
            <person name="Heaton M.P."/>
            <person name="Laegreid W.W."/>
            <person name="Rohrer G.A."/>
            <person name="Chitko-McKown C.G."/>
            <person name="Pertea G."/>
            <person name="Holt I."/>
            <person name="Karamycheva S."/>
            <person name="Liang F."/>
            <person name="Quackenbush J."/>
            <person name="Keele J.W."/>
        </authorList>
    </citation>
    <scope>NUCLEOTIDE SEQUENCE [LARGE SCALE MRNA] OF 1-110 (ISOFORM 1)</scope>
</reference>
<gene>
    <name type="primary">RBM48</name>
</gene>
<evidence type="ECO:0000250" key="1">
    <source>
        <dbReference type="UniProtKB" id="Q5RL73"/>
    </source>
</evidence>
<evidence type="ECO:0000256" key="2">
    <source>
        <dbReference type="SAM" id="MobiDB-lite"/>
    </source>
</evidence>
<evidence type="ECO:0000303" key="3">
    <source ref="1"/>
</evidence>
<evidence type="ECO:0000305" key="4"/>
<protein>
    <recommendedName>
        <fullName>RNA-binding protein 48</fullName>
    </recommendedName>
</protein>